<proteinExistence type="evidence at protein level"/>
<protein>
    <recommendedName>
        <fullName evidence="2">Vacuolar protein sorting-associated protein 26C</fullName>
    </recommendedName>
    <alternativeName>
        <fullName>Down syndrome critical region protein 3 homolog</fullName>
    </alternativeName>
    <alternativeName>
        <fullName>Down syndrome critical region protein A homolog</fullName>
    </alternativeName>
</protein>
<dbReference type="EMBL" id="AB001990">
    <property type="protein sequence ID" value="BAA23270.1"/>
    <property type="molecule type" value="mRNA"/>
</dbReference>
<dbReference type="EMBL" id="AK077485">
    <property type="protein sequence ID" value="BAC36824.1"/>
    <property type="molecule type" value="mRNA"/>
</dbReference>
<dbReference type="EMBL" id="AK077628">
    <property type="protein sequence ID" value="BAC36911.1"/>
    <property type="molecule type" value="mRNA"/>
</dbReference>
<dbReference type="EMBL" id="BC003740">
    <property type="protein sequence ID" value="AAH03740.1"/>
    <property type="molecule type" value="mRNA"/>
</dbReference>
<dbReference type="CCDS" id="CCDS28349.1"/>
<dbReference type="PIR" id="JC5699">
    <property type="entry name" value="JC5699"/>
</dbReference>
<dbReference type="RefSeq" id="NP_031860.1">
    <property type="nucleotide sequence ID" value="NM_007834.3"/>
</dbReference>
<dbReference type="SMR" id="O35075"/>
<dbReference type="FunCoup" id="O35075">
    <property type="interactions" value="2500"/>
</dbReference>
<dbReference type="IntAct" id="O35075">
    <property type="interactions" value="1"/>
</dbReference>
<dbReference type="MINT" id="O35075"/>
<dbReference type="STRING" id="10090.ENSMUSP00000023615"/>
<dbReference type="GlyGen" id="O35075">
    <property type="glycosylation" value="2 sites, 2 N-linked glycans (2 sites)"/>
</dbReference>
<dbReference type="iPTMnet" id="O35075"/>
<dbReference type="PhosphoSitePlus" id="O35075"/>
<dbReference type="SwissPalm" id="O35075"/>
<dbReference type="PaxDb" id="10090-ENSMUSP00000023615"/>
<dbReference type="PeptideAtlas" id="O35075"/>
<dbReference type="ProteomicsDB" id="277502"/>
<dbReference type="Pumba" id="O35075"/>
<dbReference type="Antibodypedia" id="8571">
    <property type="antibodies" value="133 antibodies from 22 providers"/>
</dbReference>
<dbReference type="DNASU" id="13185"/>
<dbReference type="Ensembl" id="ENSMUST00000023615.7">
    <property type="protein sequence ID" value="ENSMUSP00000023615.7"/>
    <property type="gene ID" value="ENSMUSG00000022898.14"/>
</dbReference>
<dbReference type="GeneID" id="13185"/>
<dbReference type="KEGG" id="mmu:13185"/>
<dbReference type="UCSC" id="uc008abe.2">
    <property type="organism name" value="mouse"/>
</dbReference>
<dbReference type="AGR" id="MGI:1206040"/>
<dbReference type="CTD" id="10311"/>
<dbReference type="MGI" id="MGI:1206040">
    <property type="gene designation" value="Vps26c"/>
</dbReference>
<dbReference type="VEuPathDB" id="HostDB:ENSMUSG00000022898"/>
<dbReference type="eggNOG" id="KOG2717">
    <property type="taxonomic scope" value="Eukaryota"/>
</dbReference>
<dbReference type="GeneTree" id="ENSGT00950000183064"/>
<dbReference type="HOGENOM" id="CLU_056829_0_0_1"/>
<dbReference type="InParanoid" id="O35075"/>
<dbReference type="OMA" id="CVTMPIT"/>
<dbReference type="OrthoDB" id="10263384at2759"/>
<dbReference type="PhylomeDB" id="O35075"/>
<dbReference type="TreeFam" id="TF323199"/>
<dbReference type="BioGRID-ORCS" id="13185">
    <property type="hits" value="4 hits in 76 CRISPR screens"/>
</dbReference>
<dbReference type="PRO" id="PR:O35075"/>
<dbReference type="Proteomes" id="UP000000589">
    <property type="component" value="Chromosome 16"/>
</dbReference>
<dbReference type="RNAct" id="O35075">
    <property type="molecule type" value="protein"/>
</dbReference>
<dbReference type="Bgee" id="ENSMUSG00000022898">
    <property type="expression patterns" value="Expressed in facial nucleus and 270 other cell types or tissues"/>
</dbReference>
<dbReference type="ExpressionAtlas" id="O35075">
    <property type="expression patterns" value="baseline and differential"/>
</dbReference>
<dbReference type="GO" id="GO:0005768">
    <property type="term" value="C:endosome"/>
    <property type="evidence" value="ECO:0007669"/>
    <property type="project" value="UniProtKB-SubCell"/>
</dbReference>
<dbReference type="GO" id="GO:0032456">
    <property type="term" value="P:endocytic recycling"/>
    <property type="evidence" value="ECO:0000250"/>
    <property type="project" value="UniProtKB"/>
</dbReference>
<dbReference type="GO" id="GO:0006886">
    <property type="term" value="P:intracellular protein transport"/>
    <property type="evidence" value="ECO:0007669"/>
    <property type="project" value="InterPro"/>
</dbReference>
<dbReference type="FunFam" id="2.60.40.640:FF:000008">
    <property type="entry name" value="Down syndrome critical region protein 3"/>
    <property type="match status" value="1"/>
</dbReference>
<dbReference type="FunFam" id="2.60.40.640:FF:000009">
    <property type="entry name" value="Down syndrome critical region protein 3"/>
    <property type="match status" value="1"/>
</dbReference>
<dbReference type="Gene3D" id="2.60.40.640">
    <property type="match status" value="2"/>
</dbReference>
<dbReference type="InterPro" id="IPR014752">
    <property type="entry name" value="Arrestin-like_C"/>
</dbReference>
<dbReference type="InterPro" id="IPR014756">
    <property type="entry name" value="Ig_E-set"/>
</dbReference>
<dbReference type="InterPro" id="IPR028934">
    <property type="entry name" value="Vps26-related"/>
</dbReference>
<dbReference type="PANTHER" id="PTHR12233">
    <property type="entry name" value="VACUOLAR PROTEIN SORTING 26 RELATED"/>
    <property type="match status" value="1"/>
</dbReference>
<dbReference type="Pfam" id="PF03643">
    <property type="entry name" value="Vps26"/>
    <property type="match status" value="1"/>
</dbReference>
<dbReference type="SUPFAM" id="SSF81296">
    <property type="entry name" value="E set domains"/>
    <property type="match status" value="1"/>
</dbReference>
<feature type="chain" id="PRO_0000073017" description="Vacuolar protein sorting-associated protein 26C">
    <location>
        <begin position="1"/>
        <end position="297"/>
    </location>
</feature>
<organism>
    <name type="scientific">Mus musculus</name>
    <name type="common">Mouse</name>
    <dbReference type="NCBI Taxonomy" id="10090"/>
    <lineage>
        <taxon>Eukaryota</taxon>
        <taxon>Metazoa</taxon>
        <taxon>Chordata</taxon>
        <taxon>Craniata</taxon>
        <taxon>Vertebrata</taxon>
        <taxon>Euteleostomi</taxon>
        <taxon>Mammalia</taxon>
        <taxon>Eutheria</taxon>
        <taxon>Euarchontoglires</taxon>
        <taxon>Glires</taxon>
        <taxon>Rodentia</taxon>
        <taxon>Myomorpha</taxon>
        <taxon>Muroidea</taxon>
        <taxon>Muridae</taxon>
        <taxon>Murinae</taxon>
        <taxon>Mus</taxon>
        <taxon>Mus</taxon>
    </lineage>
</organism>
<name>VP26C_MOUSE</name>
<comment type="function">
    <text evidence="1">Component of the commander complex that is essential for endosomal recycling of transmembrane cargos; the commander complex is composed of the CCC subcomplex and the retriever subcomplex (By similarity). Component of the retriever complex, which is a heterotrimeric complex related to retromer cargo-selective complex (CSC) and essential for retromer-independent retrieval and recycling of numerous cargos such as integrin alpha-5/beta-1 (ITGA5:ITGB1) (By similarity). The recruitment of the retriever complex to the endosomal membrane involves CCC and WASH complexes (By similarity). In the endosomes, drives the retriever and recycling of NxxY-motif-containing cargo proteins by coupling to SNX17, a cargo essential for the homeostatic maintenance of numerous cell surface proteins associated with processes that include cell migration, cell adhesion, nutrient supply and cell signaling (By similarity).</text>
</comment>
<comment type="subunit">
    <text evidence="1">Component of the commander complex that is essential for endosomal recycling of transmembrane cargos; the commander complex is composed of the CCC subcomplex and the retriever subcomplex (By similarity). Component of the heterotrimeric retriever complex consisting of VPS26C, VPS29 and VPS35L; within the complex interacts with VPS35L (By similarity). Interacts with SNX17 (via C-terminus); the interaction is direct and associates SNX17 with the retriever complex (By similarity). Interacts with SNX31; the interaction is direct (By similarity).</text>
</comment>
<comment type="subcellular location">
    <subcellularLocation>
        <location evidence="1">Endosome</location>
    </subcellularLocation>
</comment>
<comment type="similarity">
    <text evidence="2">Belongs to the VPS26 family.</text>
</comment>
<gene>
    <name evidence="3" type="primary">Vps26c</name>
    <name type="synonym">Dcra</name>
    <name type="synonym">Dscr3</name>
    <name type="synonym">Dscra</name>
</gene>
<reference key="1">
    <citation type="journal article" date="1997" name="J. Biochem.">
        <title>Isolation of a novel human gene from the Down syndrome critical region of chromosome 21q22.2.</title>
        <authorList>
            <person name="Nakamura A."/>
            <person name="Hattori M."/>
            <person name="Sakaki Y."/>
        </authorList>
    </citation>
    <scope>NUCLEOTIDE SEQUENCE [MRNA]</scope>
</reference>
<reference key="2">
    <citation type="journal article" date="2005" name="Science">
        <title>The transcriptional landscape of the mammalian genome.</title>
        <authorList>
            <person name="Carninci P."/>
            <person name="Kasukawa T."/>
            <person name="Katayama S."/>
            <person name="Gough J."/>
            <person name="Frith M.C."/>
            <person name="Maeda N."/>
            <person name="Oyama R."/>
            <person name="Ravasi T."/>
            <person name="Lenhard B."/>
            <person name="Wells C."/>
            <person name="Kodzius R."/>
            <person name="Shimokawa K."/>
            <person name="Bajic V.B."/>
            <person name="Brenner S.E."/>
            <person name="Batalov S."/>
            <person name="Forrest A.R."/>
            <person name="Zavolan M."/>
            <person name="Davis M.J."/>
            <person name="Wilming L.G."/>
            <person name="Aidinis V."/>
            <person name="Allen J.E."/>
            <person name="Ambesi-Impiombato A."/>
            <person name="Apweiler R."/>
            <person name="Aturaliya R.N."/>
            <person name="Bailey T.L."/>
            <person name="Bansal M."/>
            <person name="Baxter L."/>
            <person name="Beisel K.W."/>
            <person name="Bersano T."/>
            <person name="Bono H."/>
            <person name="Chalk A.M."/>
            <person name="Chiu K.P."/>
            <person name="Choudhary V."/>
            <person name="Christoffels A."/>
            <person name="Clutterbuck D.R."/>
            <person name="Crowe M.L."/>
            <person name="Dalla E."/>
            <person name="Dalrymple B.P."/>
            <person name="de Bono B."/>
            <person name="Della Gatta G."/>
            <person name="di Bernardo D."/>
            <person name="Down T."/>
            <person name="Engstrom P."/>
            <person name="Fagiolini M."/>
            <person name="Faulkner G."/>
            <person name="Fletcher C.F."/>
            <person name="Fukushima T."/>
            <person name="Furuno M."/>
            <person name="Futaki S."/>
            <person name="Gariboldi M."/>
            <person name="Georgii-Hemming P."/>
            <person name="Gingeras T.R."/>
            <person name="Gojobori T."/>
            <person name="Green R.E."/>
            <person name="Gustincich S."/>
            <person name="Harbers M."/>
            <person name="Hayashi Y."/>
            <person name="Hensch T.K."/>
            <person name="Hirokawa N."/>
            <person name="Hill D."/>
            <person name="Huminiecki L."/>
            <person name="Iacono M."/>
            <person name="Ikeo K."/>
            <person name="Iwama A."/>
            <person name="Ishikawa T."/>
            <person name="Jakt M."/>
            <person name="Kanapin A."/>
            <person name="Katoh M."/>
            <person name="Kawasawa Y."/>
            <person name="Kelso J."/>
            <person name="Kitamura H."/>
            <person name="Kitano H."/>
            <person name="Kollias G."/>
            <person name="Krishnan S.P."/>
            <person name="Kruger A."/>
            <person name="Kummerfeld S.K."/>
            <person name="Kurochkin I.V."/>
            <person name="Lareau L.F."/>
            <person name="Lazarevic D."/>
            <person name="Lipovich L."/>
            <person name="Liu J."/>
            <person name="Liuni S."/>
            <person name="McWilliam S."/>
            <person name="Madan Babu M."/>
            <person name="Madera M."/>
            <person name="Marchionni L."/>
            <person name="Matsuda H."/>
            <person name="Matsuzawa S."/>
            <person name="Miki H."/>
            <person name="Mignone F."/>
            <person name="Miyake S."/>
            <person name="Morris K."/>
            <person name="Mottagui-Tabar S."/>
            <person name="Mulder N."/>
            <person name="Nakano N."/>
            <person name="Nakauchi H."/>
            <person name="Ng P."/>
            <person name="Nilsson R."/>
            <person name="Nishiguchi S."/>
            <person name="Nishikawa S."/>
            <person name="Nori F."/>
            <person name="Ohara O."/>
            <person name="Okazaki Y."/>
            <person name="Orlando V."/>
            <person name="Pang K.C."/>
            <person name="Pavan W.J."/>
            <person name="Pavesi G."/>
            <person name="Pesole G."/>
            <person name="Petrovsky N."/>
            <person name="Piazza S."/>
            <person name="Reed J."/>
            <person name="Reid J.F."/>
            <person name="Ring B.Z."/>
            <person name="Ringwald M."/>
            <person name="Rost B."/>
            <person name="Ruan Y."/>
            <person name="Salzberg S.L."/>
            <person name="Sandelin A."/>
            <person name="Schneider C."/>
            <person name="Schoenbach C."/>
            <person name="Sekiguchi K."/>
            <person name="Semple C.A."/>
            <person name="Seno S."/>
            <person name="Sessa L."/>
            <person name="Sheng Y."/>
            <person name="Shibata Y."/>
            <person name="Shimada H."/>
            <person name="Shimada K."/>
            <person name="Silva D."/>
            <person name="Sinclair B."/>
            <person name="Sperling S."/>
            <person name="Stupka E."/>
            <person name="Sugiura K."/>
            <person name="Sultana R."/>
            <person name="Takenaka Y."/>
            <person name="Taki K."/>
            <person name="Tammoja K."/>
            <person name="Tan S.L."/>
            <person name="Tang S."/>
            <person name="Taylor M.S."/>
            <person name="Tegner J."/>
            <person name="Teichmann S.A."/>
            <person name="Ueda H.R."/>
            <person name="van Nimwegen E."/>
            <person name="Verardo R."/>
            <person name="Wei C.L."/>
            <person name="Yagi K."/>
            <person name="Yamanishi H."/>
            <person name="Zabarovsky E."/>
            <person name="Zhu S."/>
            <person name="Zimmer A."/>
            <person name="Hide W."/>
            <person name="Bult C."/>
            <person name="Grimmond S.M."/>
            <person name="Teasdale R.D."/>
            <person name="Liu E.T."/>
            <person name="Brusic V."/>
            <person name="Quackenbush J."/>
            <person name="Wahlestedt C."/>
            <person name="Mattick J.S."/>
            <person name="Hume D.A."/>
            <person name="Kai C."/>
            <person name="Sasaki D."/>
            <person name="Tomaru Y."/>
            <person name="Fukuda S."/>
            <person name="Kanamori-Katayama M."/>
            <person name="Suzuki M."/>
            <person name="Aoki J."/>
            <person name="Arakawa T."/>
            <person name="Iida J."/>
            <person name="Imamura K."/>
            <person name="Itoh M."/>
            <person name="Kato T."/>
            <person name="Kawaji H."/>
            <person name="Kawagashira N."/>
            <person name="Kawashima T."/>
            <person name="Kojima M."/>
            <person name="Kondo S."/>
            <person name="Konno H."/>
            <person name="Nakano K."/>
            <person name="Ninomiya N."/>
            <person name="Nishio T."/>
            <person name="Okada M."/>
            <person name="Plessy C."/>
            <person name="Shibata K."/>
            <person name="Shiraki T."/>
            <person name="Suzuki S."/>
            <person name="Tagami M."/>
            <person name="Waki K."/>
            <person name="Watahiki A."/>
            <person name="Okamura-Oho Y."/>
            <person name="Suzuki H."/>
            <person name="Kawai J."/>
            <person name="Hayashizaki Y."/>
        </authorList>
    </citation>
    <scope>NUCLEOTIDE SEQUENCE [LARGE SCALE MRNA]</scope>
    <source>
        <strain>C57BL/6J</strain>
    </source>
</reference>
<reference key="3">
    <citation type="journal article" date="2004" name="Genome Res.">
        <title>The status, quality, and expansion of the NIH full-length cDNA project: the Mammalian Gene Collection (MGC).</title>
        <authorList>
            <consortium name="The MGC Project Team"/>
        </authorList>
    </citation>
    <scope>NUCLEOTIDE SEQUENCE [LARGE SCALE MRNA]</scope>
    <source>
        <strain>FVB/N</strain>
        <tissue>Mammary gland</tissue>
    </source>
</reference>
<reference key="4">
    <citation type="journal article" date="2010" name="Cell">
        <title>A tissue-specific atlas of mouse protein phosphorylation and expression.</title>
        <authorList>
            <person name="Huttlin E.L."/>
            <person name="Jedrychowski M.P."/>
            <person name="Elias J.E."/>
            <person name="Goswami T."/>
            <person name="Rad R."/>
            <person name="Beausoleil S.A."/>
            <person name="Villen J."/>
            <person name="Haas W."/>
            <person name="Sowa M.E."/>
            <person name="Gygi S.P."/>
        </authorList>
    </citation>
    <scope>IDENTIFICATION BY MASS SPECTROMETRY [LARGE SCALE ANALYSIS]</scope>
    <source>
        <tissue>Brain</tissue>
        <tissue>Kidney</tissue>
        <tissue>Liver</tissue>
        <tissue>Lung</tissue>
        <tissue>Spleen</tissue>
        <tissue>Testis</tissue>
    </source>
</reference>
<evidence type="ECO:0000250" key="1">
    <source>
        <dbReference type="UniProtKB" id="O14972"/>
    </source>
</evidence>
<evidence type="ECO:0000305" key="2"/>
<evidence type="ECO:0000312" key="3">
    <source>
        <dbReference type="MGI" id="MGI:1206040"/>
    </source>
</evidence>
<keyword id="KW-0967">Endosome</keyword>
<keyword id="KW-1185">Reference proteome</keyword>
<accession>O35075</accession>
<accession>Q542V5</accession>
<sequence length="297" mass="32970">MGTTLDIKIKRANKVYHAGEMLSGVVVISSKDSVQHQGVSLTMEGTVNLQLSAKSVGVFEAFYNSVKPIQIINSTIDVLKPGKIPSGKTEVPFEFPLLVKGSKVLYETYHGVFVNIQYTLRCDMRRSLLAKDLTKTCEFIVHSAPQKGKLTPSPVDFTITPETLQNVKERASLPKFFIRGHLNSTNCAITQPLTGELVVEHSDAAIRSIELQLVRVETCGCAEGYARDATEIQNIQIADGDICRNLSVPLYMVFPRLFTCPTLETTNFKVEFEVNVVVLLHADHLITENFPLKLCRT</sequence>